<keyword id="KW-1003">Cell membrane</keyword>
<keyword id="KW-1015">Disulfide bond</keyword>
<keyword id="KW-0325">Glycoprotein</keyword>
<keyword id="KW-0336">GPI-anchor</keyword>
<keyword id="KW-0449">Lipoprotein</keyword>
<keyword id="KW-0472">Membrane</keyword>
<keyword id="KW-1185">Reference proteome</keyword>
<keyword id="KW-0732">Signal</keyword>
<comment type="function">
    <text evidence="7 9">May act as a carbohydrate transporter (PubMed:24470637). Promotes tolerance to salt stress in a redox-dependent manner (PubMed:33542250).</text>
</comment>
<comment type="subcellular location">
    <subcellularLocation>
        <location evidence="1">Cell membrane</location>
        <topology evidence="1">Lipid-anchor</topology>
        <topology evidence="1">GPI-anchor</topology>
    </subcellularLocation>
</comment>
<comment type="tissue specificity">
    <text evidence="5 6">Specifically expressed in reproductive tissues (PubMed:20423940). Mainly observed in developing seeds and in mature leaves (PubMed:21984902).</text>
</comment>
<comment type="induction">
    <text evidence="7">Accumulates in response to thiourea (TU, a non-physiological thiol-based reactive oxygen species (ROS) scavenger), TU supplementation under salt stress (NT = NaCl + TU), hydrogen peroxide H(2)O(2) and H(2)O(2) supplementation under salt stress (NH = NaCl + H(2)O(2)).</text>
</comment>
<comment type="similarity">
    <text evidence="11">Belongs to the early nodulin-like (ENODL) family.</text>
</comment>
<gene>
    <name evidence="9" type="primary">ENODL18</name>
    <name evidence="8" type="synonym">ELA3</name>
    <name evidence="10" type="synonym">EN20</name>
    <name evidence="13 14" type="ordered locus">Os06g0681200</name>
    <name evidence="11" type="ordered locus">LOC_Os06g46740</name>
    <name evidence="15" type="ORF">OsJ_22381</name>
    <name evidence="14" type="ORF">OSNPB_060681200</name>
    <name evidence="12" type="ORF">P0547F09.13</name>
</gene>
<protein>
    <recommendedName>
        <fullName evidence="9">Early nodulin-like protein 18</fullName>
        <shortName evidence="9">OsENODL18</shortName>
    </recommendedName>
    <alternativeName>
        <fullName evidence="10">Early nodulin 20</fullName>
        <shortName evidence="10">OsEN20</shortName>
    </alternativeName>
    <alternativeName>
        <fullName evidence="8">Early nodulin-like arabinogalactan protein 3</fullName>
        <shortName evidence="8">OsELA3</shortName>
    </alternativeName>
</protein>
<proteinExistence type="evidence at transcript level"/>
<sequence>MAGAVATVSVGLAWLGLMAAAASATQFRVGGGRGWSVPDANAEPYNSWAGRMRFQIGDQLLFVYPKEMDAVVVVDQGAYDACNTSSSVAGGGGGRYDDGNTVFTFDRSGPFFFISGNEANCRAGEKLVVVVMADRGGRHAPPPSPPAVPPPVAPVPMPSPASSPPSPAPAAATPSLAPSPVATTPSPSPSVSPMAPAPAPTTSTPSSPPAPAAMAPSPSTTPGGVAQPPPPPGTDGANATTPAAPAANDRSGAAAAAPVVAGVVVTSLGAYIGYAMLAI</sequence>
<reference key="1">
    <citation type="journal article" date="2005" name="Nature">
        <title>The map-based sequence of the rice genome.</title>
        <authorList>
            <consortium name="International rice genome sequencing project (IRGSP)"/>
        </authorList>
    </citation>
    <scope>NUCLEOTIDE SEQUENCE [LARGE SCALE GENOMIC DNA]</scope>
    <source>
        <strain>cv. Nipponbare</strain>
    </source>
</reference>
<reference key="2">
    <citation type="journal article" date="2008" name="Nucleic Acids Res.">
        <title>The rice annotation project database (RAP-DB): 2008 update.</title>
        <authorList>
            <consortium name="The rice annotation project (RAP)"/>
        </authorList>
    </citation>
    <scope>GENOME REANNOTATION</scope>
    <source>
        <strain>cv. Nipponbare</strain>
    </source>
</reference>
<reference key="3">
    <citation type="journal article" date="2013" name="Rice">
        <title>Improvement of the Oryza sativa Nipponbare reference genome using next generation sequence and optical map data.</title>
        <authorList>
            <person name="Kawahara Y."/>
            <person name="de la Bastide M."/>
            <person name="Hamilton J.P."/>
            <person name="Kanamori H."/>
            <person name="McCombie W.R."/>
            <person name="Ouyang S."/>
            <person name="Schwartz D.C."/>
            <person name="Tanaka T."/>
            <person name="Wu J."/>
            <person name="Zhou S."/>
            <person name="Childs K.L."/>
            <person name="Davidson R.M."/>
            <person name="Lin H."/>
            <person name="Quesada-Ocampo L."/>
            <person name="Vaillancourt B."/>
            <person name="Sakai H."/>
            <person name="Lee S.S."/>
            <person name="Kim J."/>
            <person name="Numa H."/>
            <person name="Itoh T."/>
            <person name="Buell C.R."/>
            <person name="Matsumoto T."/>
        </authorList>
    </citation>
    <scope>GENOME REANNOTATION</scope>
    <source>
        <strain>cv. Nipponbare</strain>
    </source>
</reference>
<reference key="4">
    <citation type="journal article" date="2005" name="PLoS Biol.">
        <title>The genomes of Oryza sativa: a history of duplications.</title>
        <authorList>
            <person name="Yu J."/>
            <person name="Wang J."/>
            <person name="Lin W."/>
            <person name="Li S."/>
            <person name="Li H."/>
            <person name="Zhou J."/>
            <person name="Ni P."/>
            <person name="Dong W."/>
            <person name="Hu S."/>
            <person name="Zeng C."/>
            <person name="Zhang J."/>
            <person name="Zhang Y."/>
            <person name="Li R."/>
            <person name="Xu Z."/>
            <person name="Li S."/>
            <person name="Li X."/>
            <person name="Zheng H."/>
            <person name="Cong L."/>
            <person name="Lin L."/>
            <person name="Yin J."/>
            <person name="Geng J."/>
            <person name="Li G."/>
            <person name="Shi J."/>
            <person name="Liu J."/>
            <person name="Lv H."/>
            <person name="Li J."/>
            <person name="Wang J."/>
            <person name="Deng Y."/>
            <person name="Ran L."/>
            <person name="Shi X."/>
            <person name="Wang X."/>
            <person name="Wu Q."/>
            <person name="Li C."/>
            <person name="Ren X."/>
            <person name="Wang J."/>
            <person name="Wang X."/>
            <person name="Li D."/>
            <person name="Liu D."/>
            <person name="Zhang X."/>
            <person name="Ji Z."/>
            <person name="Zhao W."/>
            <person name="Sun Y."/>
            <person name="Zhang Z."/>
            <person name="Bao J."/>
            <person name="Han Y."/>
            <person name="Dong L."/>
            <person name="Ji J."/>
            <person name="Chen P."/>
            <person name="Wu S."/>
            <person name="Liu J."/>
            <person name="Xiao Y."/>
            <person name="Bu D."/>
            <person name="Tan J."/>
            <person name="Yang L."/>
            <person name="Ye C."/>
            <person name="Zhang J."/>
            <person name="Xu J."/>
            <person name="Zhou Y."/>
            <person name="Yu Y."/>
            <person name="Zhang B."/>
            <person name="Zhuang S."/>
            <person name="Wei H."/>
            <person name="Liu B."/>
            <person name="Lei M."/>
            <person name="Yu H."/>
            <person name="Li Y."/>
            <person name="Xu H."/>
            <person name="Wei S."/>
            <person name="He X."/>
            <person name="Fang L."/>
            <person name="Zhang Z."/>
            <person name="Zhang Y."/>
            <person name="Huang X."/>
            <person name="Su Z."/>
            <person name="Tong W."/>
            <person name="Li J."/>
            <person name="Tong Z."/>
            <person name="Li S."/>
            <person name="Ye J."/>
            <person name="Wang L."/>
            <person name="Fang L."/>
            <person name="Lei T."/>
            <person name="Chen C.-S."/>
            <person name="Chen H.-C."/>
            <person name="Xu Z."/>
            <person name="Li H."/>
            <person name="Huang H."/>
            <person name="Zhang F."/>
            <person name="Xu H."/>
            <person name="Li N."/>
            <person name="Zhao C."/>
            <person name="Li S."/>
            <person name="Dong L."/>
            <person name="Huang Y."/>
            <person name="Li L."/>
            <person name="Xi Y."/>
            <person name="Qi Q."/>
            <person name="Li W."/>
            <person name="Zhang B."/>
            <person name="Hu W."/>
            <person name="Zhang Y."/>
            <person name="Tian X."/>
            <person name="Jiao Y."/>
            <person name="Liang X."/>
            <person name="Jin J."/>
            <person name="Gao L."/>
            <person name="Zheng W."/>
            <person name="Hao B."/>
            <person name="Liu S.-M."/>
            <person name="Wang W."/>
            <person name="Yuan L."/>
            <person name="Cao M."/>
            <person name="McDermott J."/>
            <person name="Samudrala R."/>
            <person name="Wang J."/>
            <person name="Wong G.K.-S."/>
            <person name="Yang H."/>
        </authorList>
    </citation>
    <scope>NUCLEOTIDE SEQUENCE [LARGE SCALE GENOMIC DNA]</scope>
    <source>
        <strain>cv. Nipponbare</strain>
    </source>
</reference>
<reference key="5">
    <citation type="journal article" date="2003" name="Science">
        <title>Collection, mapping, and annotation of over 28,000 cDNA clones from japonica rice.</title>
        <authorList>
            <consortium name="The rice full-length cDNA consortium"/>
        </authorList>
    </citation>
    <scope>NUCLEOTIDE SEQUENCE [LARGE SCALE MRNA]</scope>
    <source>
        <strain>cv. Nipponbare</strain>
    </source>
</reference>
<reference key="6">
    <citation type="journal article" date="2010" name="J. Exp. Bot.">
        <title>Genome-wide identification, classification, and expression analysis of the arabinogalactan protein gene family in rice (Oryza sativa L.).</title>
        <authorList>
            <person name="Ma H."/>
            <person name="Zhao J."/>
        </authorList>
    </citation>
    <scope>TISSUE SPECIFICITY</scope>
</reference>
<reference key="7">
    <citation type="journal article" date="2011" name="PLoS ONE">
        <title>The phytocyanin gene family in rice (Oryza sativa L.): genome-wide identification, classification and transcriptional analysis.</title>
        <authorList>
            <person name="Ma H."/>
            <person name="Zhao H."/>
            <person name="Liu Z."/>
            <person name="Zhao J."/>
        </authorList>
    </citation>
    <scope>TISSUE SPECIFICITY</scope>
    <source>
        <strain>cv. Nipponbare</strain>
    </source>
</reference>
<reference key="8">
    <citation type="journal article" date="2014" name="Plant Cell Physiol.">
        <title>Emerging functions of nodulin-like proteins in non-nodulating plant species.</title>
        <authorList>
            <person name="Denance N."/>
            <person name="Szurek B."/>
            <person name="Noel L.D."/>
        </authorList>
    </citation>
    <scope>REVIEW ON NODULIN-LIKE PROTEINS</scope>
</reference>
<reference key="9">
    <citation type="journal article" date="2021" name="Sci. Rep.">
        <title>Thiourea and hydrogen peroxide priming improved K+ retention and source-sink relationship for mitigating salt stress in rice.</title>
        <authorList>
            <person name="Pandey M."/>
            <person name="Paladi R.K."/>
            <person name="Srivastava A.K."/>
            <person name="Suprasanna P."/>
        </authorList>
    </citation>
    <scope>FUNCTION</scope>
    <scope>INDUCTION BY SALT STRESS; HYDROGEN PEROXIDE AND THIOUREA</scope>
</reference>
<organism>
    <name type="scientific">Oryza sativa subsp. japonica</name>
    <name type="common">Rice</name>
    <dbReference type="NCBI Taxonomy" id="39947"/>
    <lineage>
        <taxon>Eukaryota</taxon>
        <taxon>Viridiplantae</taxon>
        <taxon>Streptophyta</taxon>
        <taxon>Embryophyta</taxon>
        <taxon>Tracheophyta</taxon>
        <taxon>Spermatophyta</taxon>
        <taxon>Magnoliopsida</taxon>
        <taxon>Liliopsida</taxon>
        <taxon>Poales</taxon>
        <taxon>Poaceae</taxon>
        <taxon>BOP clade</taxon>
        <taxon>Oryzoideae</taxon>
        <taxon>Oryzeae</taxon>
        <taxon>Oryzinae</taxon>
        <taxon>Oryza</taxon>
        <taxon>Oryza sativa</taxon>
    </lineage>
</organism>
<accession>A3BEP8</accession>
<accession>Q653Y0</accession>
<evidence type="ECO:0000255" key="1"/>
<evidence type="ECO:0000255" key="2">
    <source>
        <dbReference type="PROSITE-ProRule" id="PRU00498"/>
    </source>
</evidence>
<evidence type="ECO:0000255" key="3">
    <source>
        <dbReference type="PROSITE-ProRule" id="PRU00818"/>
    </source>
</evidence>
<evidence type="ECO:0000256" key="4">
    <source>
        <dbReference type="SAM" id="MobiDB-lite"/>
    </source>
</evidence>
<evidence type="ECO:0000269" key="5">
    <source>
    </source>
</evidence>
<evidence type="ECO:0000269" key="6">
    <source>
    </source>
</evidence>
<evidence type="ECO:0000269" key="7">
    <source>
    </source>
</evidence>
<evidence type="ECO:0000303" key="8">
    <source>
    </source>
</evidence>
<evidence type="ECO:0000303" key="9">
    <source>
    </source>
</evidence>
<evidence type="ECO:0000303" key="10">
    <source>
    </source>
</evidence>
<evidence type="ECO:0000305" key="11"/>
<evidence type="ECO:0000312" key="12">
    <source>
        <dbReference type="EMBL" id="BAD45887.1"/>
    </source>
</evidence>
<evidence type="ECO:0000312" key="13">
    <source>
        <dbReference type="EMBL" id="BAF20290.1"/>
    </source>
</evidence>
<evidence type="ECO:0000312" key="14">
    <source>
        <dbReference type="EMBL" id="BAS99149.1"/>
    </source>
</evidence>
<evidence type="ECO:0000312" key="15">
    <source>
        <dbReference type="EMBL" id="EAZ38037.1"/>
    </source>
</evidence>
<feature type="signal peptide" evidence="1">
    <location>
        <begin position="1"/>
        <end position="24"/>
    </location>
</feature>
<feature type="chain" id="PRO_5035416705" description="Early nodulin-like protein 18">
    <location>
        <begin position="25"/>
        <end position="251"/>
    </location>
</feature>
<feature type="propeptide" id="PRO_0000457753" description="Removed in mature form" evidence="1">
    <location>
        <begin position="252"/>
        <end position="279"/>
    </location>
</feature>
<feature type="domain" description="Phytocyanin" evidence="3">
    <location>
        <begin position="25"/>
        <end position="133"/>
    </location>
</feature>
<feature type="region of interest" description="Disordered" evidence="4">
    <location>
        <begin position="138"/>
        <end position="256"/>
    </location>
</feature>
<feature type="compositionally biased region" description="Pro residues" evidence="4">
    <location>
        <begin position="140"/>
        <end position="168"/>
    </location>
</feature>
<feature type="compositionally biased region" description="Low complexity" evidence="4">
    <location>
        <begin position="169"/>
        <end position="185"/>
    </location>
</feature>
<feature type="compositionally biased region" description="Pro residues" evidence="4">
    <location>
        <begin position="186"/>
        <end position="199"/>
    </location>
</feature>
<feature type="compositionally biased region" description="Low complexity" evidence="4">
    <location>
        <begin position="212"/>
        <end position="226"/>
    </location>
</feature>
<feature type="compositionally biased region" description="Low complexity" evidence="4">
    <location>
        <begin position="234"/>
        <end position="256"/>
    </location>
</feature>
<feature type="lipid moiety-binding region" description="GPI-anchor amidated serine" evidence="1">
    <location>
        <position position="251"/>
    </location>
</feature>
<feature type="glycosylation site" description="N-linked (GlcNAc...) asparagine" evidence="2">
    <location>
        <position position="83"/>
    </location>
</feature>
<feature type="glycosylation site" description="N-linked (GlcNAc...) asparagine" evidence="2">
    <location>
        <position position="238"/>
    </location>
</feature>
<feature type="disulfide bond" evidence="3">
    <location>
        <begin position="82"/>
        <end position="121"/>
    </location>
</feature>
<dbReference type="EMBL" id="AP004797">
    <property type="protein sequence ID" value="BAD45887.1"/>
    <property type="molecule type" value="Genomic_DNA"/>
</dbReference>
<dbReference type="EMBL" id="AP008212">
    <property type="protein sequence ID" value="BAF20290.1"/>
    <property type="molecule type" value="Genomic_DNA"/>
</dbReference>
<dbReference type="EMBL" id="AP014962">
    <property type="protein sequence ID" value="BAS99149.1"/>
    <property type="molecule type" value="Genomic_DNA"/>
</dbReference>
<dbReference type="EMBL" id="CM000143">
    <property type="protein sequence ID" value="EAZ38037.1"/>
    <property type="molecule type" value="Genomic_DNA"/>
</dbReference>
<dbReference type="EMBL" id="AK107980">
    <property type="protein sequence ID" value="BAG98233.1"/>
    <property type="molecule type" value="mRNA"/>
</dbReference>
<dbReference type="RefSeq" id="XP_015641945.1">
    <property type="nucleotide sequence ID" value="XM_015786459.1"/>
</dbReference>
<dbReference type="SMR" id="A3BEP8"/>
<dbReference type="STRING" id="39947.Q653Y0"/>
<dbReference type="PaxDb" id="39947-Q653Y0"/>
<dbReference type="EnsemblPlants" id="Os06t0681200-01">
    <property type="protein sequence ID" value="Os06t0681200-01"/>
    <property type="gene ID" value="Os06g0681200"/>
</dbReference>
<dbReference type="Gramene" id="Os06t0681200-01">
    <property type="protein sequence ID" value="Os06t0681200-01"/>
    <property type="gene ID" value="Os06g0681200"/>
</dbReference>
<dbReference type="KEGG" id="dosa:Os06g0681200"/>
<dbReference type="eggNOG" id="ENOG502RZQI">
    <property type="taxonomic scope" value="Eukaryota"/>
</dbReference>
<dbReference type="HOGENOM" id="CLU_058719_1_0_1"/>
<dbReference type="OMA" id="PYNTWAG"/>
<dbReference type="OrthoDB" id="691587at2759"/>
<dbReference type="Proteomes" id="UP000000763">
    <property type="component" value="Chromosome 6"/>
</dbReference>
<dbReference type="Proteomes" id="UP000007752">
    <property type="component" value="Chromosome 6"/>
</dbReference>
<dbReference type="Proteomes" id="UP000059680">
    <property type="component" value="Chromosome 6"/>
</dbReference>
<dbReference type="GO" id="GO:0005886">
    <property type="term" value="C:plasma membrane"/>
    <property type="evidence" value="ECO:0000318"/>
    <property type="project" value="GO_Central"/>
</dbReference>
<dbReference type="GO" id="GO:0098552">
    <property type="term" value="C:side of membrane"/>
    <property type="evidence" value="ECO:0007669"/>
    <property type="project" value="UniProtKB-KW"/>
</dbReference>
<dbReference type="GO" id="GO:0009055">
    <property type="term" value="F:electron transfer activity"/>
    <property type="evidence" value="ECO:0007669"/>
    <property type="project" value="InterPro"/>
</dbReference>
<dbReference type="CDD" id="cd11019">
    <property type="entry name" value="OsENODL1_like"/>
    <property type="match status" value="1"/>
</dbReference>
<dbReference type="FunFam" id="2.60.40.420:FF:000066">
    <property type="entry name" value="Early nodulin-like protein 9"/>
    <property type="match status" value="1"/>
</dbReference>
<dbReference type="Gene3D" id="2.60.40.420">
    <property type="entry name" value="Cupredoxins - blue copper proteins"/>
    <property type="match status" value="1"/>
</dbReference>
<dbReference type="InterPro" id="IPR008972">
    <property type="entry name" value="Cupredoxin"/>
</dbReference>
<dbReference type="InterPro" id="IPR041846">
    <property type="entry name" value="ENL_dom"/>
</dbReference>
<dbReference type="InterPro" id="IPR039391">
    <property type="entry name" value="Phytocyanin-like"/>
</dbReference>
<dbReference type="InterPro" id="IPR003245">
    <property type="entry name" value="Phytocyanin_dom"/>
</dbReference>
<dbReference type="PANTHER" id="PTHR33021">
    <property type="entry name" value="BLUE COPPER PROTEIN"/>
    <property type="match status" value="1"/>
</dbReference>
<dbReference type="PANTHER" id="PTHR33021:SF253">
    <property type="entry name" value="EARLY NODULIN-LIKE PROTEIN 9"/>
    <property type="match status" value="1"/>
</dbReference>
<dbReference type="Pfam" id="PF02298">
    <property type="entry name" value="Cu_bind_like"/>
    <property type="match status" value="1"/>
</dbReference>
<dbReference type="PRINTS" id="PR01217">
    <property type="entry name" value="PRICHEXTENSN"/>
</dbReference>
<dbReference type="SUPFAM" id="SSF49503">
    <property type="entry name" value="Cupredoxins"/>
    <property type="match status" value="1"/>
</dbReference>
<dbReference type="PROSITE" id="PS51485">
    <property type="entry name" value="PHYTOCYANIN"/>
    <property type="match status" value="1"/>
</dbReference>
<name>ENL18_ORYSJ</name>